<dbReference type="EC" id="6.1.1.14" evidence="1"/>
<dbReference type="EMBL" id="CP000444">
    <property type="protein sequence ID" value="ABI41015.1"/>
    <property type="molecule type" value="Genomic_DNA"/>
</dbReference>
<dbReference type="SMR" id="Q0I0U0"/>
<dbReference type="KEGG" id="shm:Shewmr7_0009"/>
<dbReference type="HOGENOM" id="CLU_057066_1_0_6"/>
<dbReference type="GO" id="GO:0005829">
    <property type="term" value="C:cytosol"/>
    <property type="evidence" value="ECO:0007669"/>
    <property type="project" value="TreeGrafter"/>
</dbReference>
<dbReference type="GO" id="GO:0005524">
    <property type="term" value="F:ATP binding"/>
    <property type="evidence" value="ECO:0007669"/>
    <property type="project" value="UniProtKB-UniRule"/>
</dbReference>
<dbReference type="GO" id="GO:0004820">
    <property type="term" value="F:glycine-tRNA ligase activity"/>
    <property type="evidence" value="ECO:0007669"/>
    <property type="project" value="UniProtKB-UniRule"/>
</dbReference>
<dbReference type="GO" id="GO:0006426">
    <property type="term" value="P:glycyl-tRNA aminoacylation"/>
    <property type="evidence" value="ECO:0007669"/>
    <property type="project" value="UniProtKB-UniRule"/>
</dbReference>
<dbReference type="CDD" id="cd00733">
    <property type="entry name" value="GlyRS_alpha_core"/>
    <property type="match status" value="1"/>
</dbReference>
<dbReference type="FunFam" id="3.30.930.10:FF:000006">
    <property type="entry name" value="Glycine--tRNA ligase alpha subunit"/>
    <property type="match status" value="1"/>
</dbReference>
<dbReference type="Gene3D" id="3.30.930.10">
    <property type="entry name" value="Bira Bifunctional Protein, Domain 2"/>
    <property type="match status" value="1"/>
</dbReference>
<dbReference type="Gene3D" id="1.20.58.180">
    <property type="entry name" value="Class II aaRS and biotin synthetases, domain 2"/>
    <property type="match status" value="1"/>
</dbReference>
<dbReference type="HAMAP" id="MF_00254">
    <property type="entry name" value="Gly_tRNA_synth_alpha"/>
    <property type="match status" value="1"/>
</dbReference>
<dbReference type="InterPro" id="IPR045864">
    <property type="entry name" value="aa-tRNA-synth_II/BPL/LPL"/>
</dbReference>
<dbReference type="InterPro" id="IPR006194">
    <property type="entry name" value="Gly-tRNA-synth_heterodimer"/>
</dbReference>
<dbReference type="InterPro" id="IPR002310">
    <property type="entry name" value="Gly-tRNA_ligase_asu"/>
</dbReference>
<dbReference type="NCBIfam" id="TIGR00388">
    <property type="entry name" value="glyQ"/>
    <property type="match status" value="1"/>
</dbReference>
<dbReference type="NCBIfam" id="NF006827">
    <property type="entry name" value="PRK09348.1"/>
    <property type="match status" value="1"/>
</dbReference>
<dbReference type="PANTHER" id="PTHR30075:SF2">
    <property type="entry name" value="GLYCINE--TRNA LIGASE, CHLOROPLASTIC_MITOCHONDRIAL 2"/>
    <property type="match status" value="1"/>
</dbReference>
<dbReference type="PANTHER" id="PTHR30075">
    <property type="entry name" value="GLYCYL-TRNA SYNTHETASE"/>
    <property type="match status" value="1"/>
</dbReference>
<dbReference type="Pfam" id="PF02091">
    <property type="entry name" value="tRNA-synt_2e"/>
    <property type="match status" value="1"/>
</dbReference>
<dbReference type="PRINTS" id="PR01044">
    <property type="entry name" value="TRNASYNTHGA"/>
</dbReference>
<dbReference type="SUPFAM" id="SSF55681">
    <property type="entry name" value="Class II aaRS and biotin synthetases"/>
    <property type="match status" value="1"/>
</dbReference>
<dbReference type="PROSITE" id="PS50861">
    <property type="entry name" value="AA_TRNA_LIGASE_II_GLYAB"/>
    <property type="match status" value="1"/>
</dbReference>
<accession>Q0I0U0</accession>
<reference key="1">
    <citation type="submission" date="2006-08" db="EMBL/GenBank/DDBJ databases">
        <title>Complete sequence of chromosome 1 of Shewanella sp. MR-7.</title>
        <authorList>
            <person name="Copeland A."/>
            <person name="Lucas S."/>
            <person name="Lapidus A."/>
            <person name="Barry K."/>
            <person name="Detter J.C."/>
            <person name="Glavina del Rio T."/>
            <person name="Hammon N."/>
            <person name="Israni S."/>
            <person name="Dalin E."/>
            <person name="Tice H."/>
            <person name="Pitluck S."/>
            <person name="Kiss H."/>
            <person name="Brettin T."/>
            <person name="Bruce D."/>
            <person name="Han C."/>
            <person name="Tapia R."/>
            <person name="Gilna P."/>
            <person name="Schmutz J."/>
            <person name="Larimer F."/>
            <person name="Land M."/>
            <person name="Hauser L."/>
            <person name="Kyrpides N."/>
            <person name="Mikhailova N."/>
            <person name="Nealson K."/>
            <person name="Konstantinidis K."/>
            <person name="Klappenbach J."/>
            <person name="Tiedje J."/>
            <person name="Richardson P."/>
        </authorList>
    </citation>
    <scope>NUCLEOTIDE SEQUENCE [LARGE SCALE GENOMIC DNA]</scope>
    <source>
        <strain>MR-7</strain>
    </source>
</reference>
<feature type="chain" id="PRO_1000047491" description="Glycine--tRNA ligase alpha subunit">
    <location>
        <begin position="1"/>
        <end position="301"/>
    </location>
</feature>
<name>SYGA_SHESR</name>
<comment type="catalytic activity">
    <reaction evidence="1">
        <text>tRNA(Gly) + glycine + ATP = glycyl-tRNA(Gly) + AMP + diphosphate</text>
        <dbReference type="Rhea" id="RHEA:16013"/>
        <dbReference type="Rhea" id="RHEA-COMP:9664"/>
        <dbReference type="Rhea" id="RHEA-COMP:9683"/>
        <dbReference type="ChEBI" id="CHEBI:30616"/>
        <dbReference type="ChEBI" id="CHEBI:33019"/>
        <dbReference type="ChEBI" id="CHEBI:57305"/>
        <dbReference type="ChEBI" id="CHEBI:78442"/>
        <dbReference type="ChEBI" id="CHEBI:78522"/>
        <dbReference type="ChEBI" id="CHEBI:456215"/>
        <dbReference type="EC" id="6.1.1.14"/>
    </reaction>
</comment>
<comment type="subunit">
    <text evidence="1">Tetramer of two alpha and two beta subunits.</text>
</comment>
<comment type="subcellular location">
    <subcellularLocation>
        <location evidence="1">Cytoplasm</location>
    </subcellularLocation>
</comment>
<comment type="similarity">
    <text evidence="1">Belongs to the class-II aminoacyl-tRNA synthetase family.</text>
</comment>
<sequence length="301" mass="34478">MTTKHDVKTFQGFILTLQEYWAQQGCAIVQPLDMEVGAGTFHPQTFLRSLGPEPMSSAYVQPSRRPTDGRYGENPNRLQHYYQFQVVLKPSPDNIQELYLGSLQALGIDTQIHDIRFVEDNWESPTLGAWGLGWEVWLNGMEVTQFTYFQQVGGLECSPVTGEITYGLERLAMYIQGVDSVYDLVWTDGPMGRITYGDVFHQNEVEQSTYNFEHADVDFMFALFDQCEKMCQHLLSLEKPLPLPAYEQVMKASHAFNLLDARHAISVTERQRYILRVRTMAKAVAESYYQAREALGFPMCK</sequence>
<gene>
    <name evidence="1" type="primary">glyQ</name>
    <name type="ordered locus">Shewmr7_0009</name>
</gene>
<proteinExistence type="inferred from homology"/>
<protein>
    <recommendedName>
        <fullName evidence="1">Glycine--tRNA ligase alpha subunit</fullName>
        <ecNumber evidence="1">6.1.1.14</ecNumber>
    </recommendedName>
    <alternativeName>
        <fullName evidence="1">Glycyl-tRNA synthetase alpha subunit</fullName>
        <shortName evidence="1">GlyRS</shortName>
    </alternativeName>
</protein>
<keyword id="KW-0030">Aminoacyl-tRNA synthetase</keyword>
<keyword id="KW-0067">ATP-binding</keyword>
<keyword id="KW-0963">Cytoplasm</keyword>
<keyword id="KW-0436">Ligase</keyword>
<keyword id="KW-0547">Nucleotide-binding</keyword>
<keyword id="KW-0648">Protein biosynthesis</keyword>
<evidence type="ECO:0000255" key="1">
    <source>
        <dbReference type="HAMAP-Rule" id="MF_00254"/>
    </source>
</evidence>
<organism>
    <name type="scientific">Shewanella sp. (strain MR-7)</name>
    <dbReference type="NCBI Taxonomy" id="60481"/>
    <lineage>
        <taxon>Bacteria</taxon>
        <taxon>Pseudomonadati</taxon>
        <taxon>Pseudomonadota</taxon>
        <taxon>Gammaproteobacteria</taxon>
        <taxon>Alteromonadales</taxon>
        <taxon>Shewanellaceae</taxon>
        <taxon>Shewanella</taxon>
    </lineage>
</organism>